<sequence>MSTVKTFSSTETEGFKKRLLSRRHSSYQVRDEEDDVLEEFIVLKLDLFLTRLNHRMKRLEELGLPNRKDAAAATYQFLANLQASFLGTTILGKTQVSFILRRIEETYNDVLSACDTFPAKAQKALTFLEHHLRDLEDYAEKSKNNVETLMTDIKDVVEHAAKLGAQRLITLEELPVQWHNNPYIIRGYRFYTSKRKCFRSILSWHNETFNIWTHLSAFIVFFAVLAYFYPSSSSWVSSNVSNRIVRIFFLLSAMKCLGCSVIWHTFSSLSNYKHMRCAACMDYVGISALIAASIISVEYHAFVCQGPLRFIFIAFTGTLGLIGIYTPWKKWFNEYKYRSVKIFFFVGLACSGLIPMITMFYIKGTRRTVKYLDPVFKSIFSYIIGVLFYGLHIPERFLPGKFDIIGNSHQIWHIAIIVGVAFHYTGVKRFETDYEAFSCGVL</sequence>
<protein>
    <recommendedName>
        <fullName>Uncharacterized protein C30D11.11</fullName>
    </recommendedName>
</protein>
<evidence type="ECO:0000255" key="1"/>
<evidence type="ECO:0000305" key="2"/>
<organism>
    <name type="scientific">Schizosaccharomyces pombe (strain 972 / ATCC 24843)</name>
    <name type="common">Fission yeast</name>
    <dbReference type="NCBI Taxonomy" id="284812"/>
    <lineage>
        <taxon>Eukaryota</taxon>
        <taxon>Fungi</taxon>
        <taxon>Dikarya</taxon>
        <taxon>Ascomycota</taxon>
        <taxon>Taphrinomycotina</taxon>
        <taxon>Schizosaccharomycetes</taxon>
        <taxon>Schizosaccharomycetales</taxon>
        <taxon>Schizosaccharomycetaceae</taxon>
        <taxon>Schizosaccharomyces</taxon>
    </lineage>
</organism>
<comment type="subcellular location">
    <subcellularLocation>
        <location evidence="2">Membrane</location>
        <topology evidence="2">Multi-pass membrane protein</topology>
    </subcellularLocation>
</comment>
<name>YAJB_SCHPO</name>
<gene>
    <name type="ORF">SPAC30D11.11</name>
</gene>
<proteinExistence type="predicted"/>
<reference key="1">
    <citation type="journal article" date="2002" name="Nature">
        <title>The genome sequence of Schizosaccharomyces pombe.</title>
        <authorList>
            <person name="Wood V."/>
            <person name="Gwilliam R."/>
            <person name="Rajandream M.A."/>
            <person name="Lyne M.H."/>
            <person name="Lyne R."/>
            <person name="Stewart A."/>
            <person name="Sgouros J.G."/>
            <person name="Peat N."/>
            <person name="Hayles J."/>
            <person name="Baker S.G."/>
            <person name="Basham D."/>
            <person name="Bowman S."/>
            <person name="Brooks K."/>
            <person name="Brown D."/>
            <person name="Brown S."/>
            <person name="Chillingworth T."/>
            <person name="Churcher C.M."/>
            <person name="Collins M."/>
            <person name="Connor R."/>
            <person name="Cronin A."/>
            <person name="Davis P."/>
            <person name="Feltwell T."/>
            <person name="Fraser A."/>
            <person name="Gentles S."/>
            <person name="Goble A."/>
            <person name="Hamlin N."/>
            <person name="Harris D.E."/>
            <person name="Hidalgo J."/>
            <person name="Hodgson G."/>
            <person name="Holroyd S."/>
            <person name="Hornsby T."/>
            <person name="Howarth S."/>
            <person name="Huckle E.J."/>
            <person name="Hunt S."/>
            <person name="Jagels K."/>
            <person name="James K.D."/>
            <person name="Jones L."/>
            <person name="Jones M."/>
            <person name="Leather S."/>
            <person name="McDonald S."/>
            <person name="McLean J."/>
            <person name="Mooney P."/>
            <person name="Moule S."/>
            <person name="Mungall K.L."/>
            <person name="Murphy L.D."/>
            <person name="Niblett D."/>
            <person name="Odell C."/>
            <person name="Oliver K."/>
            <person name="O'Neil S."/>
            <person name="Pearson D."/>
            <person name="Quail M.A."/>
            <person name="Rabbinowitsch E."/>
            <person name="Rutherford K.M."/>
            <person name="Rutter S."/>
            <person name="Saunders D."/>
            <person name="Seeger K."/>
            <person name="Sharp S."/>
            <person name="Skelton J."/>
            <person name="Simmonds M.N."/>
            <person name="Squares R."/>
            <person name="Squares S."/>
            <person name="Stevens K."/>
            <person name="Taylor K."/>
            <person name="Taylor R.G."/>
            <person name="Tivey A."/>
            <person name="Walsh S.V."/>
            <person name="Warren T."/>
            <person name="Whitehead S."/>
            <person name="Woodward J.R."/>
            <person name="Volckaert G."/>
            <person name="Aert R."/>
            <person name="Robben J."/>
            <person name="Grymonprez B."/>
            <person name="Weltjens I."/>
            <person name="Vanstreels E."/>
            <person name="Rieger M."/>
            <person name="Schaefer M."/>
            <person name="Mueller-Auer S."/>
            <person name="Gabel C."/>
            <person name="Fuchs M."/>
            <person name="Duesterhoeft A."/>
            <person name="Fritzc C."/>
            <person name="Holzer E."/>
            <person name="Moestl D."/>
            <person name="Hilbert H."/>
            <person name="Borzym K."/>
            <person name="Langer I."/>
            <person name="Beck A."/>
            <person name="Lehrach H."/>
            <person name="Reinhardt R."/>
            <person name="Pohl T.M."/>
            <person name="Eger P."/>
            <person name="Zimmermann W."/>
            <person name="Wedler H."/>
            <person name="Wambutt R."/>
            <person name="Purnelle B."/>
            <person name="Goffeau A."/>
            <person name="Cadieu E."/>
            <person name="Dreano S."/>
            <person name="Gloux S."/>
            <person name="Lelaure V."/>
            <person name="Mottier S."/>
            <person name="Galibert F."/>
            <person name="Aves S.J."/>
            <person name="Xiang Z."/>
            <person name="Hunt C."/>
            <person name="Moore K."/>
            <person name="Hurst S.M."/>
            <person name="Lucas M."/>
            <person name="Rochet M."/>
            <person name="Gaillardin C."/>
            <person name="Tallada V.A."/>
            <person name="Garzon A."/>
            <person name="Thode G."/>
            <person name="Daga R.R."/>
            <person name="Cruzado L."/>
            <person name="Jimenez J."/>
            <person name="Sanchez M."/>
            <person name="del Rey F."/>
            <person name="Benito J."/>
            <person name="Dominguez A."/>
            <person name="Revuelta J.L."/>
            <person name="Moreno S."/>
            <person name="Armstrong J."/>
            <person name="Forsburg S.L."/>
            <person name="Cerutti L."/>
            <person name="Lowe T."/>
            <person name="McCombie W.R."/>
            <person name="Paulsen I."/>
            <person name="Potashkin J."/>
            <person name="Shpakovski G.V."/>
            <person name="Ussery D."/>
            <person name="Barrell B.G."/>
            <person name="Nurse P."/>
        </authorList>
    </citation>
    <scope>NUCLEOTIDE SEQUENCE [LARGE SCALE GENOMIC DNA]</scope>
    <source>
        <strain>972 / ATCC 24843</strain>
    </source>
</reference>
<feature type="chain" id="PRO_0000116438" description="Uncharacterized protein C30D11.11">
    <location>
        <begin position="1"/>
        <end position="442"/>
    </location>
</feature>
<feature type="transmembrane region" description="Helical" evidence="1">
    <location>
        <begin position="209"/>
        <end position="229"/>
    </location>
</feature>
<feature type="transmembrane region" description="Helical" evidence="1">
    <location>
        <begin position="247"/>
        <end position="267"/>
    </location>
</feature>
<feature type="transmembrane region" description="Helical" evidence="1">
    <location>
        <begin position="284"/>
        <end position="304"/>
    </location>
</feature>
<feature type="transmembrane region" description="Helical" evidence="1">
    <location>
        <begin position="308"/>
        <end position="328"/>
    </location>
</feature>
<feature type="transmembrane region" description="Helical" evidence="1">
    <location>
        <begin position="342"/>
        <end position="362"/>
    </location>
</feature>
<feature type="transmembrane region" description="Helical" evidence="1">
    <location>
        <begin position="374"/>
        <end position="394"/>
    </location>
</feature>
<feature type="transmembrane region" description="Helical" evidence="1">
    <location>
        <begin position="402"/>
        <end position="422"/>
    </location>
</feature>
<accession>Q09910</accession>
<dbReference type="EMBL" id="CU329670">
    <property type="protein sequence ID" value="CAA91897.1"/>
    <property type="molecule type" value="Genomic_DNA"/>
</dbReference>
<dbReference type="PIR" id="T38588">
    <property type="entry name" value="S62569"/>
</dbReference>
<dbReference type="SMR" id="Q09910"/>
<dbReference type="BioGRID" id="279000">
    <property type="interactions" value="14"/>
</dbReference>
<dbReference type="FunCoup" id="Q09910">
    <property type="interactions" value="6"/>
</dbReference>
<dbReference type="STRING" id="284812.Q09910"/>
<dbReference type="iPTMnet" id="Q09910"/>
<dbReference type="PaxDb" id="4896-SPAC30D11.11.1"/>
<dbReference type="EnsemblFungi" id="SPAC30D11.11.1">
    <property type="protein sequence ID" value="SPAC30D11.11.1:pep"/>
    <property type="gene ID" value="SPAC30D11.11"/>
</dbReference>
<dbReference type="KEGG" id="spo:2542543"/>
<dbReference type="PomBase" id="SPAC30D11.11"/>
<dbReference type="VEuPathDB" id="FungiDB:SPAC30D11.11"/>
<dbReference type="eggNOG" id="KOG0748">
    <property type="taxonomic scope" value="Eukaryota"/>
</dbReference>
<dbReference type="HOGENOM" id="CLU_029962_0_0_1"/>
<dbReference type="InParanoid" id="Q09910"/>
<dbReference type="OMA" id="SRWTYIL"/>
<dbReference type="PhylomeDB" id="Q09910"/>
<dbReference type="PRO" id="PR:Q09910"/>
<dbReference type="Proteomes" id="UP000002485">
    <property type="component" value="Chromosome I"/>
</dbReference>
<dbReference type="GO" id="GO:0005783">
    <property type="term" value="C:endoplasmic reticulum"/>
    <property type="evidence" value="ECO:0007005"/>
    <property type="project" value="PomBase"/>
</dbReference>
<dbReference type="GO" id="GO:0005789">
    <property type="term" value="C:endoplasmic reticulum membrane"/>
    <property type="evidence" value="ECO:0000305"/>
    <property type="project" value="PomBase"/>
</dbReference>
<dbReference type="GO" id="GO:0046872">
    <property type="term" value="F:metal ion binding"/>
    <property type="evidence" value="ECO:0000266"/>
    <property type="project" value="PomBase"/>
</dbReference>
<dbReference type="GO" id="GO:0038023">
    <property type="term" value="F:signaling receptor activity"/>
    <property type="evidence" value="ECO:0000318"/>
    <property type="project" value="GO_Central"/>
</dbReference>
<dbReference type="GO" id="GO:0006882">
    <property type="term" value="P:intracellular zinc ion homeostasis"/>
    <property type="evidence" value="ECO:0000318"/>
    <property type="project" value="GO_Central"/>
</dbReference>
<dbReference type="InterPro" id="IPR004254">
    <property type="entry name" value="AdipoR/HlyIII-related"/>
</dbReference>
<dbReference type="PANTHER" id="PTHR20855:SF97">
    <property type="entry name" value="ADIPOR-LIKE RECEPTOR IZH3-RELATED"/>
    <property type="match status" value="1"/>
</dbReference>
<dbReference type="PANTHER" id="PTHR20855">
    <property type="entry name" value="ADIPOR/PROGESTIN RECEPTOR-RELATED"/>
    <property type="match status" value="1"/>
</dbReference>
<dbReference type="Pfam" id="PF03006">
    <property type="entry name" value="HlyIII"/>
    <property type="match status" value="1"/>
</dbReference>
<keyword id="KW-0472">Membrane</keyword>
<keyword id="KW-1185">Reference proteome</keyword>
<keyword id="KW-0812">Transmembrane</keyword>
<keyword id="KW-1133">Transmembrane helix</keyword>